<keyword id="KW-1185">Reference proteome</keyword>
<gene>
    <name type="primary">yxiS</name>
    <name type="ordered locus">BSU39040</name>
    <name type="ORF">N15F</name>
</gene>
<accession>P42310</accession>
<proteinExistence type="predicted"/>
<evidence type="ECO:0000305" key="1"/>
<protein>
    <recommendedName>
        <fullName>Uncharacterized protein YxiS</fullName>
    </recommendedName>
</protein>
<dbReference type="EMBL" id="D83026">
    <property type="protein sequence ID" value="BAA11700.1"/>
    <property type="molecule type" value="Genomic_DNA"/>
</dbReference>
<dbReference type="EMBL" id="AL009126">
    <property type="protein sequence ID" value="CAB15930.2"/>
    <property type="molecule type" value="Genomic_DNA"/>
</dbReference>
<dbReference type="PIR" id="E70078">
    <property type="entry name" value="E70078"/>
</dbReference>
<dbReference type="RefSeq" id="NP_391783.2">
    <property type="nucleotide sequence ID" value="NC_000964.3"/>
</dbReference>
<dbReference type="RefSeq" id="WP_003242704.1">
    <property type="nucleotide sequence ID" value="NZ_OZ025638.1"/>
</dbReference>
<dbReference type="FunCoup" id="P42310">
    <property type="interactions" value="30"/>
</dbReference>
<dbReference type="STRING" id="224308.BSU39040"/>
<dbReference type="PaxDb" id="224308-BSU39040"/>
<dbReference type="EnsemblBacteria" id="CAB15930">
    <property type="protein sequence ID" value="CAB15930"/>
    <property type="gene ID" value="BSU_39040"/>
</dbReference>
<dbReference type="GeneID" id="937467"/>
<dbReference type="KEGG" id="bsu:BSU39040"/>
<dbReference type="PATRIC" id="fig|224308.179.peg.4227"/>
<dbReference type="eggNOG" id="ENOG5032S7D">
    <property type="taxonomic scope" value="Bacteria"/>
</dbReference>
<dbReference type="InParanoid" id="P42310"/>
<dbReference type="OrthoDB" id="2678957at2"/>
<dbReference type="BioCyc" id="BSUB:BSU39040-MONOMER"/>
<dbReference type="Proteomes" id="UP000001570">
    <property type="component" value="Chromosome"/>
</dbReference>
<name>YXIS_BACSU</name>
<feature type="chain" id="PRO_0000050032" description="Uncharacterized protein YxiS">
    <location>
        <begin position="1"/>
        <end position="96"/>
    </location>
</feature>
<feature type="sequence conflict" description="In Ref. 1; BAA11700." evidence="1" ref="1">
    <original>E</original>
    <variation>R</variation>
    <location>
        <position position="3"/>
    </location>
</feature>
<organism>
    <name type="scientific">Bacillus subtilis (strain 168)</name>
    <dbReference type="NCBI Taxonomy" id="224308"/>
    <lineage>
        <taxon>Bacteria</taxon>
        <taxon>Bacillati</taxon>
        <taxon>Bacillota</taxon>
        <taxon>Bacilli</taxon>
        <taxon>Bacillales</taxon>
        <taxon>Bacillaceae</taxon>
        <taxon>Bacillus</taxon>
    </lineage>
</organism>
<reference key="1">
    <citation type="journal article" date="1996" name="Microbiology">
        <title>Sequencing of a 65 kb region of the Bacillus subtilis genome containing the lic and cel loci, and creation of a 177 kb contig covering the gnt-sacXY region.</title>
        <authorList>
            <person name="Yoshida K."/>
            <person name="Shindo K."/>
            <person name="Sano H."/>
            <person name="Seki S."/>
            <person name="Fujimura M."/>
            <person name="Yanai N."/>
            <person name="Miwa Y."/>
            <person name="Fujita Y."/>
        </authorList>
    </citation>
    <scope>NUCLEOTIDE SEQUENCE [GENOMIC DNA]</scope>
    <source>
        <strain>168 / BGSC1A1</strain>
    </source>
</reference>
<reference key="2">
    <citation type="journal article" date="1997" name="Nature">
        <title>The complete genome sequence of the Gram-positive bacterium Bacillus subtilis.</title>
        <authorList>
            <person name="Kunst F."/>
            <person name="Ogasawara N."/>
            <person name="Moszer I."/>
            <person name="Albertini A.M."/>
            <person name="Alloni G."/>
            <person name="Azevedo V."/>
            <person name="Bertero M.G."/>
            <person name="Bessieres P."/>
            <person name="Bolotin A."/>
            <person name="Borchert S."/>
            <person name="Borriss R."/>
            <person name="Boursier L."/>
            <person name="Brans A."/>
            <person name="Braun M."/>
            <person name="Brignell S.C."/>
            <person name="Bron S."/>
            <person name="Brouillet S."/>
            <person name="Bruschi C.V."/>
            <person name="Caldwell B."/>
            <person name="Capuano V."/>
            <person name="Carter N.M."/>
            <person name="Choi S.-K."/>
            <person name="Codani J.-J."/>
            <person name="Connerton I.F."/>
            <person name="Cummings N.J."/>
            <person name="Daniel R.A."/>
            <person name="Denizot F."/>
            <person name="Devine K.M."/>
            <person name="Duesterhoeft A."/>
            <person name="Ehrlich S.D."/>
            <person name="Emmerson P.T."/>
            <person name="Entian K.-D."/>
            <person name="Errington J."/>
            <person name="Fabret C."/>
            <person name="Ferrari E."/>
            <person name="Foulger D."/>
            <person name="Fritz C."/>
            <person name="Fujita M."/>
            <person name="Fujita Y."/>
            <person name="Fuma S."/>
            <person name="Galizzi A."/>
            <person name="Galleron N."/>
            <person name="Ghim S.-Y."/>
            <person name="Glaser P."/>
            <person name="Goffeau A."/>
            <person name="Golightly E.J."/>
            <person name="Grandi G."/>
            <person name="Guiseppi G."/>
            <person name="Guy B.J."/>
            <person name="Haga K."/>
            <person name="Haiech J."/>
            <person name="Harwood C.R."/>
            <person name="Henaut A."/>
            <person name="Hilbert H."/>
            <person name="Holsappel S."/>
            <person name="Hosono S."/>
            <person name="Hullo M.-F."/>
            <person name="Itaya M."/>
            <person name="Jones L.-M."/>
            <person name="Joris B."/>
            <person name="Karamata D."/>
            <person name="Kasahara Y."/>
            <person name="Klaerr-Blanchard M."/>
            <person name="Klein C."/>
            <person name="Kobayashi Y."/>
            <person name="Koetter P."/>
            <person name="Koningstein G."/>
            <person name="Krogh S."/>
            <person name="Kumano M."/>
            <person name="Kurita K."/>
            <person name="Lapidus A."/>
            <person name="Lardinois S."/>
            <person name="Lauber J."/>
            <person name="Lazarevic V."/>
            <person name="Lee S.-M."/>
            <person name="Levine A."/>
            <person name="Liu H."/>
            <person name="Masuda S."/>
            <person name="Mauel C."/>
            <person name="Medigue C."/>
            <person name="Medina N."/>
            <person name="Mellado R.P."/>
            <person name="Mizuno M."/>
            <person name="Moestl D."/>
            <person name="Nakai S."/>
            <person name="Noback M."/>
            <person name="Noone D."/>
            <person name="O'Reilly M."/>
            <person name="Ogawa K."/>
            <person name="Ogiwara A."/>
            <person name="Oudega B."/>
            <person name="Park S.-H."/>
            <person name="Parro V."/>
            <person name="Pohl T.M."/>
            <person name="Portetelle D."/>
            <person name="Porwollik S."/>
            <person name="Prescott A.M."/>
            <person name="Presecan E."/>
            <person name="Pujic P."/>
            <person name="Purnelle B."/>
            <person name="Rapoport G."/>
            <person name="Rey M."/>
            <person name="Reynolds S."/>
            <person name="Rieger M."/>
            <person name="Rivolta C."/>
            <person name="Rocha E."/>
            <person name="Roche B."/>
            <person name="Rose M."/>
            <person name="Sadaie Y."/>
            <person name="Sato T."/>
            <person name="Scanlan E."/>
            <person name="Schleich S."/>
            <person name="Schroeter R."/>
            <person name="Scoffone F."/>
            <person name="Sekiguchi J."/>
            <person name="Sekowska A."/>
            <person name="Seror S.J."/>
            <person name="Serror P."/>
            <person name="Shin B.-S."/>
            <person name="Soldo B."/>
            <person name="Sorokin A."/>
            <person name="Tacconi E."/>
            <person name="Takagi T."/>
            <person name="Takahashi H."/>
            <person name="Takemaru K."/>
            <person name="Takeuchi M."/>
            <person name="Tamakoshi A."/>
            <person name="Tanaka T."/>
            <person name="Terpstra P."/>
            <person name="Tognoni A."/>
            <person name="Tosato V."/>
            <person name="Uchiyama S."/>
            <person name="Vandenbol M."/>
            <person name="Vannier F."/>
            <person name="Vassarotti A."/>
            <person name="Viari A."/>
            <person name="Wambutt R."/>
            <person name="Wedler E."/>
            <person name="Wedler H."/>
            <person name="Weitzenegger T."/>
            <person name="Winters P."/>
            <person name="Wipat A."/>
            <person name="Yamamoto H."/>
            <person name="Yamane K."/>
            <person name="Yasumoto K."/>
            <person name="Yata K."/>
            <person name="Yoshida K."/>
            <person name="Yoshikawa H.-F."/>
            <person name="Zumstein E."/>
            <person name="Yoshikawa H."/>
            <person name="Danchin A."/>
        </authorList>
    </citation>
    <scope>NUCLEOTIDE SEQUENCE [LARGE SCALE GENOMIC DNA]</scope>
    <source>
        <strain>168</strain>
    </source>
</reference>
<reference key="3">
    <citation type="journal article" date="2009" name="Microbiology">
        <title>From a consortium sequence to a unified sequence: the Bacillus subtilis 168 reference genome a decade later.</title>
        <authorList>
            <person name="Barbe V."/>
            <person name="Cruveiller S."/>
            <person name="Kunst F."/>
            <person name="Lenoble P."/>
            <person name="Meurice G."/>
            <person name="Sekowska A."/>
            <person name="Vallenet D."/>
            <person name="Wang T."/>
            <person name="Moszer I."/>
            <person name="Medigue C."/>
            <person name="Danchin A."/>
        </authorList>
    </citation>
    <scope>SEQUENCE REVISION TO 3</scope>
</reference>
<sequence length="96" mass="11101">MNEKQLTEAYERDENMMILVFAQWCVNHDLDPMELYAKAYPQQKLNESLKKTMDDLVVPKHEAEHIPDQTVIAVLEMFGNTDLAQALHEAISGRKQ</sequence>